<accession>A3CYG8</accession>
<dbReference type="EC" id="1.2.1.59" evidence="1"/>
<dbReference type="EMBL" id="CP000562">
    <property type="protein sequence ID" value="ABN58418.1"/>
    <property type="molecule type" value="Genomic_DNA"/>
</dbReference>
<dbReference type="RefSeq" id="WP_011845327.1">
    <property type="nucleotide sequence ID" value="NC_009051.1"/>
</dbReference>
<dbReference type="SMR" id="A3CYG8"/>
<dbReference type="STRING" id="368407.Memar_2497"/>
<dbReference type="GeneID" id="4848447"/>
<dbReference type="KEGG" id="mem:Memar_2497"/>
<dbReference type="eggNOG" id="arCOG00493">
    <property type="taxonomic scope" value="Archaea"/>
</dbReference>
<dbReference type="HOGENOM" id="CLU_069533_0_0_2"/>
<dbReference type="OrthoDB" id="295712at2157"/>
<dbReference type="UniPathway" id="UPA00109">
    <property type="reaction ID" value="UER00184"/>
</dbReference>
<dbReference type="Proteomes" id="UP000002146">
    <property type="component" value="Chromosome"/>
</dbReference>
<dbReference type="GO" id="GO:0005737">
    <property type="term" value="C:cytoplasm"/>
    <property type="evidence" value="ECO:0007669"/>
    <property type="project" value="UniProtKB-SubCell"/>
</dbReference>
<dbReference type="GO" id="GO:0008839">
    <property type="term" value="F:4-hydroxy-tetrahydrodipicolinate reductase"/>
    <property type="evidence" value="ECO:0007669"/>
    <property type="project" value="InterPro"/>
</dbReference>
<dbReference type="GO" id="GO:0004365">
    <property type="term" value="F:glyceraldehyde-3-phosphate dehydrogenase (NAD+) (phosphorylating) activity"/>
    <property type="evidence" value="ECO:0007669"/>
    <property type="project" value="UniProtKB-UniRule"/>
</dbReference>
<dbReference type="GO" id="GO:0047100">
    <property type="term" value="F:glyceraldehyde-3-phosphate dehydrogenase (NADP+) (phosphorylating) activity"/>
    <property type="evidence" value="ECO:0007669"/>
    <property type="project" value="RHEA"/>
</dbReference>
<dbReference type="GO" id="GO:0051287">
    <property type="term" value="F:NAD binding"/>
    <property type="evidence" value="ECO:0007669"/>
    <property type="project" value="InterPro"/>
</dbReference>
<dbReference type="GO" id="GO:0050661">
    <property type="term" value="F:NADP binding"/>
    <property type="evidence" value="ECO:0007669"/>
    <property type="project" value="InterPro"/>
</dbReference>
<dbReference type="GO" id="GO:0006096">
    <property type="term" value="P:glycolytic process"/>
    <property type="evidence" value="ECO:0007669"/>
    <property type="project" value="UniProtKB-UniRule"/>
</dbReference>
<dbReference type="GO" id="GO:0009089">
    <property type="term" value="P:lysine biosynthetic process via diaminopimelate"/>
    <property type="evidence" value="ECO:0007669"/>
    <property type="project" value="InterPro"/>
</dbReference>
<dbReference type="CDD" id="cd18127">
    <property type="entry name" value="GAPDH_II_C"/>
    <property type="match status" value="1"/>
</dbReference>
<dbReference type="CDD" id="cd02278">
    <property type="entry name" value="GAPDH_II_N"/>
    <property type="match status" value="1"/>
</dbReference>
<dbReference type="Gene3D" id="3.30.360.10">
    <property type="entry name" value="Dihydrodipicolinate Reductase, domain 2"/>
    <property type="match status" value="1"/>
</dbReference>
<dbReference type="Gene3D" id="3.40.50.720">
    <property type="entry name" value="NAD(P)-binding Rossmann-like Domain"/>
    <property type="match status" value="1"/>
</dbReference>
<dbReference type="HAMAP" id="MF_00559">
    <property type="entry name" value="G3P_dehdrog_arch"/>
    <property type="match status" value="1"/>
</dbReference>
<dbReference type="InterPro" id="IPR000846">
    <property type="entry name" value="DapB_N"/>
</dbReference>
<dbReference type="InterPro" id="IPR020831">
    <property type="entry name" value="GlycerAld/Erythrose_P_DH"/>
</dbReference>
<dbReference type="InterPro" id="IPR020829">
    <property type="entry name" value="GlycerAld_3-P_DH_cat"/>
</dbReference>
<dbReference type="InterPro" id="IPR020828">
    <property type="entry name" value="GlycerAld_3-P_DH_NAD(P)-bd"/>
</dbReference>
<dbReference type="InterPro" id="IPR006436">
    <property type="entry name" value="Glyceraldehyde-3-P_DH_2_arc"/>
</dbReference>
<dbReference type="InterPro" id="IPR036291">
    <property type="entry name" value="NAD(P)-bd_dom_sf"/>
</dbReference>
<dbReference type="NCBIfam" id="TIGR01546">
    <property type="entry name" value="GAPDH-II_archae"/>
    <property type="match status" value="1"/>
</dbReference>
<dbReference type="NCBIfam" id="NF003251">
    <property type="entry name" value="PRK04207.1"/>
    <property type="match status" value="1"/>
</dbReference>
<dbReference type="Pfam" id="PF01113">
    <property type="entry name" value="DapB_N"/>
    <property type="match status" value="1"/>
</dbReference>
<dbReference type="Pfam" id="PF02800">
    <property type="entry name" value="Gp_dh_C"/>
    <property type="match status" value="1"/>
</dbReference>
<dbReference type="PIRSF" id="PIRSF000149">
    <property type="entry name" value="GAP_DH"/>
    <property type="match status" value="1"/>
</dbReference>
<dbReference type="SMART" id="SM00846">
    <property type="entry name" value="Gp_dh_N"/>
    <property type="match status" value="1"/>
</dbReference>
<dbReference type="SUPFAM" id="SSF55347">
    <property type="entry name" value="Glyceraldehyde-3-phosphate dehydrogenase-like, C-terminal domain"/>
    <property type="match status" value="1"/>
</dbReference>
<dbReference type="SUPFAM" id="SSF51735">
    <property type="entry name" value="NAD(P)-binding Rossmann-fold domains"/>
    <property type="match status" value="1"/>
</dbReference>
<gene>
    <name evidence="1" type="primary">gap</name>
    <name type="ordered locus">Memar_2497</name>
</gene>
<evidence type="ECO:0000255" key="1">
    <source>
        <dbReference type="HAMAP-Rule" id="MF_00559"/>
    </source>
</evidence>
<proteinExistence type="inferred from homology"/>
<feature type="chain" id="PRO_0000300973" description="Glyceraldehyde-3-phosphate dehydrogenase">
    <location>
        <begin position="1"/>
        <end position="341"/>
    </location>
</feature>
<feature type="active site" description="Nucleophile" evidence="1">
    <location>
        <position position="140"/>
    </location>
</feature>
<feature type="binding site" evidence="1">
    <location>
        <begin position="11"/>
        <end position="12"/>
    </location>
    <ligand>
        <name>NAD(+)</name>
        <dbReference type="ChEBI" id="CHEBI:57540"/>
    </ligand>
</feature>
<feature type="binding site" evidence="1">
    <location>
        <position position="110"/>
    </location>
    <ligand>
        <name>NAD(+)</name>
        <dbReference type="ChEBI" id="CHEBI:57540"/>
    </ligand>
</feature>
<feature type="binding site" evidence="1">
    <location>
        <begin position="139"/>
        <end position="141"/>
    </location>
    <ligand>
        <name>D-glyceraldehyde 3-phosphate</name>
        <dbReference type="ChEBI" id="CHEBI:59776"/>
    </ligand>
</feature>
<feature type="binding site" evidence="1">
    <location>
        <position position="168"/>
    </location>
    <ligand>
        <name>NAD(+)</name>
        <dbReference type="ChEBI" id="CHEBI:57540"/>
    </ligand>
</feature>
<feature type="binding site" evidence="1">
    <location>
        <begin position="194"/>
        <end position="195"/>
    </location>
    <ligand>
        <name>D-glyceraldehyde 3-phosphate</name>
        <dbReference type="ChEBI" id="CHEBI:59776"/>
    </ligand>
</feature>
<feature type="binding site" evidence="1">
    <location>
        <position position="302"/>
    </location>
    <ligand>
        <name>NAD(+)</name>
        <dbReference type="ChEBI" id="CHEBI:57540"/>
    </ligand>
</feature>
<sequence length="341" mass="37212">MIKVAINGYGTIGKRVADAVAAQPDMEVIGVSKTSVSAEAYIAKERGYPLYIADLGKKPAFEKAGIEVAGDVEAMLKAADIVVDATPGGVGEKNRPIYEKLGKKAIFQGGEDHEVAGFSFNAHANYNEAENHQFARVVSCNSTGLVRIIHALDQAFGVARVRAVMVRRGADPDDVKRGPIDAIVLNPASIPSHHGPDVNTVLPHINIVTLAMIVPTTFMHMHSIQMDLKKETTREEVLKVFENHSRIGLVRKTMGIKSNAQLREYTQDLGRPRTDLWENGVFEESVSILDGKEFYCFQAIHQEADVVPENIDCIRALMGTVKDPQESIRMTNEALGLVAIG</sequence>
<reference key="1">
    <citation type="journal article" date="2009" name="Stand. Genomic Sci.">
        <title>Complete genome sequence of Methanoculleus marisnigri Romesser et al. 1981 type strain JR1.</title>
        <authorList>
            <person name="Anderson I.J."/>
            <person name="Sieprawska-Lupa M."/>
            <person name="Lapidus A."/>
            <person name="Nolan M."/>
            <person name="Copeland A."/>
            <person name="Glavina Del Rio T."/>
            <person name="Tice H."/>
            <person name="Dalin E."/>
            <person name="Barry K."/>
            <person name="Saunders E."/>
            <person name="Han C."/>
            <person name="Brettin T."/>
            <person name="Detter J.C."/>
            <person name="Bruce D."/>
            <person name="Mikhailova N."/>
            <person name="Pitluck S."/>
            <person name="Hauser L."/>
            <person name="Land M."/>
            <person name="Lucas S."/>
            <person name="Richardson P."/>
            <person name="Whitman W.B."/>
            <person name="Kyrpides N.C."/>
        </authorList>
    </citation>
    <scope>NUCLEOTIDE SEQUENCE [LARGE SCALE GENOMIC DNA]</scope>
    <source>
        <strain>ATCC 35101 / DSM 1498 / JR1</strain>
    </source>
</reference>
<organism>
    <name type="scientific">Methanoculleus marisnigri (strain ATCC 35101 / DSM 1498 / JR1)</name>
    <dbReference type="NCBI Taxonomy" id="368407"/>
    <lineage>
        <taxon>Archaea</taxon>
        <taxon>Methanobacteriati</taxon>
        <taxon>Methanobacteriota</taxon>
        <taxon>Stenosarchaea group</taxon>
        <taxon>Methanomicrobia</taxon>
        <taxon>Methanomicrobiales</taxon>
        <taxon>Methanomicrobiaceae</taxon>
        <taxon>Methanoculleus</taxon>
    </lineage>
</organism>
<protein>
    <recommendedName>
        <fullName evidence="1">Glyceraldehyde-3-phosphate dehydrogenase</fullName>
        <shortName evidence="1">GAPDH</shortName>
        <ecNumber evidence="1">1.2.1.59</ecNumber>
    </recommendedName>
    <alternativeName>
        <fullName evidence="1">NAD(P)-dependent glyceraldehyde-3-phosphate dehydrogenase</fullName>
    </alternativeName>
</protein>
<name>G3P_METMJ</name>
<comment type="catalytic activity">
    <reaction evidence="1">
        <text>D-glyceraldehyde 3-phosphate + phosphate + NADP(+) = (2R)-3-phospho-glyceroyl phosphate + NADPH + H(+)</text>
        <dbReference type="Rhea" id="RHEA:10296"/>
        <dbReference type="ChEBI" id="CHEBI:15378"/>
        <dbReference type="ChEBI" id="CHEBI:43474"/>
        <dbReference type="ChEBI" id="CHEBI:57604"/>
        <dbReference type="ChEBI" id="CHEBI:57783"/>
        <dbReference type="ChEBI" id="CHEBI:58349"/>
        <dbReference type="ChEBI" id="CHEBI:59776"/>
        <dbReference type="EC" id="1.2.1.59"/>
    </reaction>
</comment>
<comment type="catalytic activity">
    <reaction evidence="1">
        <text>D-glyceraldehyde 3-phosphate + phosphate + NAD(+) = (2R)-3-phospho-glyceroyl phosphate + NADH + H(+)</text>
        <dbReference type="Rhea" id="RHEA:10300"/>
        <dbReference type="ChEBI" id="CHEBI:15378"/>
        <dbReference type="ChEBI" id="CHEBI:43474"/>
        <dbReference type="ChEBI" id="CHEBI:57540"/>
        <dbReference type="ChEBI" id="CHEBI:57604"/>
        <dbReference type="ChEBI" id="CHEBI:57945"/>
        <dbReference type="ChEBI" id="CHEBI:59776"/>
        <dbReference type="EC" id="1.2.1.59"/>
    </reaction>
</comment>
<comment type="pathway">
    <text evidence="1">Carbohydrate degradation; glycolysis; pyruvate from D-glyceraldehyde 3-phosphate: step 1/5.</text>
</comment>
<comment type="subunit">
    <text evidence="1">Homotetramer.</text>
</comment>
<comment type="subcellular location">
    <subcellularLocation>
        <location evidence="1">Cytoplasm</location>
    </subcellularLocation>
</comment>
<comment type="similarity">
    <text evidence="1">Belongs to the glyceraldehyde-3-phosphate dehydrogenase family.</text>
</comment>
<keyword id="KW-0963">Cytoplasm</keyword>
<keyword id="KW-0324">Glycolysis</keyword>
<keyword id="KW-0520">NAD</keyword>
<keyword id="KW-0521">NADP</keyword>
<keyword id="KW-0560">Oxidoreductase</keyword>